<dbReference type="EC" id="4.6.1.12" evidence="1"/>
<dbReference type="EMBL" id="AL954747">
    <property type="protein sequence ID" value="CAD85313.1"/>
    <property type="molecule type" value="Genomic_DNA"/>
</dbReference>
<dbReference type="RefSeq" id="WP_011111970.1">
    <property type="nucleotide sequence ID" value="NC_004757.1"/>
</dbReference>
<dbReference type="SMR" id="Q82US7"/>
<dbReference type="STRING" id="228410.NE1402"/>
<dbReference type="GeneID" id="87104575"/>
<dbReference type="KEGG" id="neu:NE1402"/>
<dbReference type="eggNOG" id="COG0245">
    <property type="taxonomic scope" value="Bacteria"/>
</dbReference>
<dbReference type="HOGENOM" id="CLU_084630_2_0_4"/>
<dbReference type="OrthoDB" id="9804336at2"/>
<dbReference type="PhylomeDB" id="Q82US7"/>
<dbReference type="UniPathway" id="UPA00056">
    <property type="reaction ID" value="UER00095"/>
</dbReference>
<dbReference type="Proteomes" id="UP000001416">
    <property type="component" value="Chromosome"/>
</dbReference>
<dbReference type="GO" id="GO:0008685">
    <property type="term" value="F:2-C-methyl-D-erythritol 2,4-cyclodiphosphate synthase activity"/>
    <property type="evidence" value="ECO:0007669"/>
    <property type="project" value="UniProtKB-UniRule"/>
</dbReference>
<dbReference type="GO" id="GO:0046872">
    <property type="term" value="F:metal ion binding"/>
    <property type="evidence" value="ECO:0007669"/>
    <property type="project" value="UniProtKB-KW"/>
</dbReference>
<dbReference type="GO" id="GO:0019288">
    <property type="term" value="P:isopentenyl diphosphate biosynthetic process, methylerythritol 4-phosphate pathway"/>
    <property type="evidence" value="ECO:0007669"/>
    <property type="project" value="UniProtKB-UniRule"/>
</dbReference>
<dbReference type="GO" id="GO:0016114">
    <property type="term" value="P:terpenoid biosynthetic process"/>
    <property type="evidence" value="ECO:0007669"/>
    <property type="project" value="InterPro"/>
</dbReference>
<dbReference type="CDD" id="cd00554">
    <property type="entry name" value="MECDP_synthase"/>
    <property type="match status" value="1"/>
</dbReference>
<dbReference type="FunFam" id="3.30.1330.50:FF:000001">
    <property type="entry name" value="2-C-methyl-D-erythritol 2,4-cyclodiphosphate synthase"/>
    <property type="match status" value="1"/>
</dbReference>
<dbReference type="Gene3D" id="3.30.1330.50">
    <property type="entry name" value="2-C-methyl-D-erythritol 2,4-cyclodiphosphate synthase"/>
    <property type="match status" value="1"/>
</dbReference>
<dbReference type="HAMAP" id="MF_00107">
    <property type="entry name" value="IspF"/>
    <property type="match status" value="1"/>
</dbReference>
<dbReference type="InterPro" id="IPR003526">
    <property type="entry name" value="MECDP_synthase"/>
</dbReference>
<dbReference type="InterPro" id="IPR020555">
    <property type="entry name" value="MECDP_synthase_CS"/>
</dbReference>
<dbReference type="InterPro" id="IPR036571">
    <property type="entry name" value="MECDP_synthase_sf"/>
</dbReference>
<dbReference type="NCBIfam" id="TIGR00151">
    <property type="entry name" value="ispF"/>
    <property type="match status" value="1"/>
</dbReference>
<dbReference type="PANTHER" id="PTHR43181">
    <property type="entry name" value="2-C-METHYL-D-ERYTHRITOL 2,4-CYCLODIPHOSPHATE SYNTHASE, CHLOROPLASTIC"/>
    <property type="match status" value="1"/>
</dbReference>
<dbReference type="PANTHER" id="PTHR43181:SF1">
    <property type="entry name" value="2-C-METHYL-D-ERYTHRITOL 2,4-CYCLODIPHOSPHATE SYNTHASE, CHLOROPLASTIC"/>
    <property type="match status" value="1"/>
</dbReference>
<dbReference type="Pfam" id="PF02542">
    <property type="entry name" value="YgbB"/>
    <property type="match status" value="1"/>
</dbReference>
<dbReference type="SUPFAM" id="SSF69765">
    <property type="entry name" value="IpsF-like"/>
    <property type="match status" value="1"/>
</dbReference>
<dbReference type="PROSITE" id="PS01350">
    <property type="entry name" value="ISPF"/>
    <property type="match status" value="1"/>
</dbReference>
<gene>
    <name evidence="1" type="primary">ispF</name>
    <name type="ordered locus">NE1402</name>
</gene>
<proteinExistence type="inferred from homology"/>
<keyword id="KW-0414">Isoprene biosynthesis</keyword>
<keyword id="KW-0456">Lyase</keyword>
<keyword id="KW-0479">Metal-binding</keyword>
<keyword id="KW-1185">Reference proteome</keyword>
<reference key="1">
    <citation type="journal article" date="2003" name="J. Bacteriol.">
        <title>Complete genome sequence of the ammonia-oxidizing bacterium and obligate chemolithoautotroph Nitrosomonas europaea.</title>
        <authorList>
            <person name="Chain P."/>
            <person name="Lamerdin J.E."/>
            <person name="Larimer F.W."/>
            <person name="Regala W."/>
            <person name="Lao V."/>
            <person name="Land M.L."/>
            <person name="Hauser L."/>
            <person name="Hooper A.B."/>
            <person name="Klotz M.G."/>
            <person name="Norton J."/>
            <person name="Sayavedra-Soto L.A."/>
            <person name="Arciero D.M."/>
            <person name="Hommes N.G."/>
            <person name="Whittaker M.M."/>
            <person name="Arp D.J."/>
        </authorList>
    </citation>
    <scope>NUCLEOTIDE SEQUENCE [LARGE SCALE GENOMIC DNA]</scope>
    <source>
        <strain>ATCC 19718 / CIP 103999 / KCTC 2705 / NBRC 14298</strain>
    </source>
</reference>
<feature type="chain" id="PRO_0000189488" description="2-C-methyl-D-erythritol 2,4-cyclodiphosphate synthase">
    <location>
        <begin position="1"/>
        <end position="163"/>
    </location>
</feature>
<feature type="binding site" evidence="1">
    <location>
        <begin position="11"/>
        <end position="13"/>
    </location>
    <ligand>
        <name>4-CDP-2-C-methyl-D-erythritol 2-phosphate</name>
        <dbReference type="ChEBI" id="CHEBI:57919"/>
    </ligand>
</feature>
<feature type="binding site" evidence="1">
    <location>
        <position position="11"/>
    </location>
    <ligand>
        <name>a divalent metal cation</name>
        <dbReference type="ChEBI" id="CHEBI:60240"/>
    </ligand>
</feature>
<feature type="binding site" evidence="1">
    <location>
        <position position="13"/>
    </location>
    <ligand>
        <name>a divalent metal cation</name>
        <dbReference type="ChEBI" id="CHEBI:60240"/>
    </ligand>
</feature>
<feature type="binding site" evidence="1">
    <location>
        <begin position="37"/>
        <end position="38"/>
    </location>
    <ligand>
        <name>4-CDP-2-C-methyl-D-erythritol 2-phosphate</name>
        <dbReference type="ChEBI" id="CHEBI:57919"/>
    </ligand>
</feature>
<feature type="binding site" evidence="1">
    <location>
        <position position="45"/>
    </location>
    <ligand>
        <name>a divalent metal cation</name>
        <dbReference type="ChEBI" id="CHEBI:60240"/>
    </ligand>
</feature>
<feature type="binding site" evidence="1">
    <location>
        <begin position="59"/>
        <end position="61"/>
    </location>
    <ligand>
        <name>4-CDP-2-C-methyl-D-erythritol 2-phosphate</name>
        <dbReference type="ChEBI" id="CHEBI:57919"/>
    </ligand>
</feature>
<feature type="binding site" evidence="1">
    <location>
        <begin position="64"/>
        <end position="68"/>
    </location>
    <ligand>
        <name>4-CDP-2-C-methyl-D-erythritol 2-phosphate</name>
        <dbReference type="ChEBI" id="CHEBI:57919"/>
    </ligand>
</feature>
<feature type="binding site" evidence="1">
    <location>
        <begin position="103"/>
        <end position="109"/>
    </location>
    <ligand>
        <name>4-CDP-2-C-methyl-D-erythritol 2-phosphate</name>
        <dbReference type="ChEBI" id="CHEBI:57919"/>
    </ligand>
</feature>
<feature type="binding site" evidence="1">
    <location>
        <position position="145"/>
    </location>
    <ligand>
        <name>4-CDP-2-C-methyl-D-erythritol 2-phosphate</name>
        <dbReference type="ChEBI" id="CHEBI:57919"/>
    </ligand>
</feature>
<feature type="site" description="Transition state stabilizer" evidence="1">
    <location>
        <position position="37"/>
    </location>
</feature>
<feature type="site" description="Transition state stabilizer" evidence="1">
    <location>
        <position position="136"/>
    </location>
</feature>
<accession>Q82US7</accession>
<name>ISPF_NITEU</name>
<evidence type="ECO:0000255" key="1">
    <source>
        <dbReference type="HAMAP-Rule" id="MF_00107"/>
    </source>
</evidence>
<sequence>MKKIRIGQGFDIHPLVVGRDLIIGGVTIPYEKGLLGHSDADVLLHALCDALLGAAALGDIGRHFSDTDARYQGIDSRKLVREVHRLLTEAGYRVVNIDATIIAQVPKMAPHIPGMVTNIAQDLTLPAGDINIKAKTAEKLGVVGRGEGIVAEVVCLIADGDEV</sequence>
<comment type="function">
    <text evidence="1">Involved in the biosynthesis of isopentenyl diphosphate (IPP) and dimethylallyl diphosphate (DMAPP), two major building blocks of isoprenoid compounds. Catalyzes the conversion of 4-diphosphocytidyl-2-C-methyl-D-erythritol 2-phosphate (CDP-ME2P) to 2-C-methyl-D-erythritol 2,4-cyclodiphosphate (ME-CPP) with a corresponding release of cytidine 5-monophosphate (CMP).</text>
</comment>
<comment type="catalytic activity">
    <reaction evidence="1">
        <text>4-CDP-2-C-methyl-D-erythritol 2-phosphate = 2-C-methyl-D-erythritol 2,4-cyclic diphosphate + CMP</text>
        <dbReference type="Rhea" id="RHEA:23864"/>
        <dbReference type="ChEBI" id="CHEBI:57919"/>
        <dbReference type="ChEBI" id="CHEBI:58483"/>
        <dbReference type="ChEBI" id="CHEBI:60377"/>
        <dbReference type="EC" id="4.6.1.12"/>
    </reaction>
</comment>
<comment type="cofactor">
    <cofactor evidence="1">
        <name>a divalent metal cation</name>
        <dbReference type="ChEBI" id="CHEBI:60240"/>
    </cofactor>
    <text evidence="1">Binds 1 divalent metal cation per subunit.</text>
</comment>
<comment type="pathway">
    <text evidence="1">Isoprenoid biosynthesis; isopentenyl diphosphate biosynthesis via DXP pathway; isopentenyl diphosphate from 1-deoxy-D-xylulose 5-phosphate: step 4/6.</text>
</comment>
<comment type="subunit">
    <text evidence="1">Homotrimer.</text>
</comment>
<comment type="similarity">
    <text evidence="1">Belongs to the IspF family.</text>
</comment>
<organism>
    <name type="scientific">Nitrosomonas europaea (strain ATCC 19718 / CIP 103999 / KCTC 2705 / NBRC 14298)</name>
    <dbReference type="NCBI Taxonomy" id="228410"/>
    <lineage>
        <taxon>Bacteria</taxon>
        <taxon>Pseudomonadati</taxon>
        <taxon>Pseudomonadota</taxon>
        <taxon>Betaproteobacteria</taxon>
        <taxon>Nitrosomonadales</taxon>
        <taxon>Nitrosomonadaceae</taxon>
        <taxon>Nitrosomonas</taxon>
    </lineage>
</organism>
<protein>
    <recommendedName>
        <fullName evidence="1">2-C-methyl-D-erythritol 2,4-cyclodiphosphate synthase</fullName>
        <shortName evidence="1">MECDP-synthase</shortName>
        <shortName evidence="1">MECPP-synthase</shortName>
        <shortName evidence="1">MECPS</shortName>
        <ecNumber evidence="1">4.6.1.12</ecNumber>
    </recommendedName>
</protein>